<gene>
    <name evidence="1" type="primary">rpoB</name>
</gene>
<comment type="function">
    <text evidence="1">DNA-dependent RNA polymerase catalyzes the transcription of DNA into RNA using the four ribonucleoside triphosphates as substrates.</text>
</comment>
<comment type="catalytic activity">
    <reaction evidence="1">
        <text>RNA(n) + a ribonucleoside 5'-triphosphate = RNA(n+1) + diphosphate</text>
        <dbReference type="Rhea" id="RHEA:21248"/>
        <dbReference type="Rhea" id="RHEA-COMP:14527"/>
        <dbReference type="Rhea" id="RHEA-COMP:17342"/>
        <dbReference type="ChEBI" id="CHEBI:33019"/>
        <dbReference type="ChEBI" id="CHEBI:61557"/>
        <dbReference type="ChEBI" id="CHEBI:140395"/>
        <dbReference type="EC" id="2.7.7.6"/>
    </reaction>
</comment>
<comment type="subunit">
    <text evidence="1">In plastids the minimal PEP RNA polymerase catalytic core is composed of four subunits: alpha, beta, beta', and beta''. When a (nuclear-encoded) sigma factor is associated with the core the holoenzyme is formed, which can initiate transcription.</text>
</comment>
<comment type="subcellular location">
    <subcellularLocation>
        <location>Plastid</location>
        <location>Chloroplast</location>
    </subcellularLocation>
</comment>
<comment type="similarity">
    <text evidence="1">Belongs to the RNA polymerase beta chain family.</text>
</comment>
<evidence type="ECO:0000255" key="1">
    <source>
        <dbReference type="HAMAP-Rule" id="MF_01321"/>
    </source>
</evidence>
<keyword id="KW-0150">Chloroplast</keyword>
<keyword id="KW-0240">DNA-directed RNA polymerase</keyword>
<keyword id="KW-0548">Nucleotidyltransferase</keyword>
<keyword id="KW-0934">Plastid</keyword>
<keyword id="KW-0804">Transcription</keyword>
<keyword id="KW-0808">Transferase</keyword>
<geneLocation type="chloroplast"/>
<feature type="chain" id="PRO_0000300434" description="DNA-directed RNA polymerase subunit beta">
    <location>
        <begin position="1"/>
        <end position="1070"/>
    </location>
</feature>
<organism>
    <name type="scientific">Buxus microphylla</name>
    <name type="common">Littleleaf boxwood</name>
    <name type="synonym">Japanese boxwood</name>
    <dbReference type="NCBI Taxonomy" id="153571"/>
    <lineage>
        <taxon>Eukaryota</taxon>
        <taxon>Viridiplantae</taxon>
        <taxon>Streptophyta</taxon>
        <taxon>Embryophyta</taxon>
        <taxon>Tracheophyta</taxon>
        <taxon>Spermatophyta</taxon>
        <taxon>Magnoliopsida</taxon>
        <taxon>Buxales</taxon>
        <taxon>Buxaceae</taxon>
        <taxon>Buxus</taxon>
    </lineage>
</organism>
<dbReference type="EC" id="2.7.7.6" evidence="1"/>
<dbReference type="EMBL" id="EF380351">
    <property type="protein sequence ID" value="ABQ45241.1"/>
    <property type="molecule type" value="Genomic_DNA"/>
</dbReference>
<dbReference type="RefSeq" id="YP_001294176.1">
    <property type="nucleotide sequence ID" value="NC_009599.1"/>
</dbReference>
<dbReference type="SMR" id="A6MM28"/>
<dbReference type="GeneID" id="5236941"/>
<dbReference type="GO" id="GO:0009507">
    <property type="term" value="C:chloroplast"/>
    <property type="evidence" value="ECO:0007669"/>
    <property type="project" value="UniProtKB-SubCell"/>
</dbReference>
<dbReference type="GO" id="GO:0000428">
    <property type="term" value="C:DNA-directed RNA polymerase complex"/>
    <property type="evidence" value="ECO:0007669"/>
    <property type="project" value="UniProtKB-KW"/>
</dbReference>
<dbReference type="GO" id="GO:0005739">
    <property type="term" value="C:mitochondrion"/>
    <property type="evidence" value="ECO:0007669"/>
    <property type="project" value="GOC"/>
</dbReference>
<dbReference type="GO" id="GO:0003677">
    <property type="term" value="F:DNA binding"/>
    <property type="evidence" value="ECO:0007669"/>
    <property type="project" value="UniProtKB-UniRule"/>
</dbReference>
<dbReference type="GO" id="GO:0003899">
    <property type="term" value="F:DNA-directed RNA polymerase activity"/>
    <property type="evidence" value="ECO:0007669"/>
    <property type="project" value="UniProtKB-UniRule"/>
</dbReference>
<dbReference type="GO" id="GO:0032549">
    <property type="term" value="F:ribonucleoside binding"/>
    <property type="evidence" value="ECO:0007669"/>
    <property type="project" value="InterPro"/>
</dbReference>
<dbReference type="GO" id="GO:0006351">
    <property type="term" value="P:DNA-templated transcription"/>
    <property type="evidence" value="ECO:0007669"/>
    <property type="project" value="UniProtKB-UniRule"/>
</dbReference>
<dbReference type="CDD" id="cd00653">
    <property type="entry name" value="RNA_pol_B_RPB2"/>
    <property type="match status" value="1"/>
</dbReference>
<dbReference type="FunFam" id="3.90.1110.10:FF:000009">
    <property type="entry name" value="DNA-directed RNA polymerase subunit beta"/>
    <property type="match status" value="1"/>
</dbReference>
<dbReference type="Gene3D" id="2.40.50.100">
    <property type="match status" value="1"/>
</dbReference>
<dbReference type="Gene3D" id="2.40.50.150">
    <property type="match status" value="1"/>
</dbReference>
<dbReference type="Gene3D" id="3.90.1100.10">
    <property type="match status" value="1"/>
</dbReference>
<dbReference type="Gene3D" id="2.30.150.10">
    <property type="entry name" value="DNA-directed RNA polymerase, beta subunit, external 1 domain"/>
    <property type="match status" value="1"/>
</dbReference>
<dbReference type="Gene3D" id="2.40.270.10">
    <property type="entry name" value="DNA-directed RNA polymerase, subunit 2, domain 6"/>
    <property type="match status" value="2"/>
</dbReference>
<dbReference type="Gene3D" id="3.90.1800.10">
    <property type="entry name" value="RNA polymerase alpha subunit dimerisation domain"/>
    <property type="match status" value="1"/>
</dbReference>
<dbReference type="Gene3D" id="3.90.1110.10">
    <property type="entry name" value="RNA polymerase Rpb2, domain 2"/>
    <property type="match status" value="1"/>
</dbReference>
<dbReference type="HAMAP" id="MF_01321">
    <property type="entry name" value="RNApol_bact_RpoB"/>
    <property type="match status" value="1"/>
</dbReference>
<dbReference type="InterPro" id="IPR042107">
    <property type="entry name" value="DNA-dir_RNA_pol_bsu_ext_1_sf"/>
</dbReference>
<dbReference type="InterPro" id="IPR015712">
    <property type="entry name" value="DNA-dir_RNA_pol_su2"/>
</dbReference>
<dbReference type="InterPro" id="IPR007120">
    <property type="entry name" value="DNA-dir_RNAP_su2_dom"/>
</dbReference>
<dbReference type="InterPro" id="IPR037033">
    <property type="entry name" value="DNA-dir_RNAP_su2_hyb_sf"/>
</dbReference>
<dbReference type="InterPro" id="IPR010243">
    <property type="entry name" value="RNA_pol_bsu_bac"/>
</dbReference>
<dbReference type="InterPro" id="IPR007121">
    <property type="entry name" value="RNA_pol_bsu_CS"/>
</dbReference>
<dbReference type="InterPro" id="IPR007642">
    <property type="entry name" value="RNA_pol_Rpb2_2"/>
</dbReference>
<dbReference type="InterPro" id="IPR037034">
    <property type="entry name" value="RNA_pol_Rpb2_2_sf"/>
</dbReference>
<dbReference type="InterPro" id="IPR007645">
    <property type="entry name" value="RNA_pol_Rpb2_3"/>
</dbReference>
<dbReference type="InterPro" id="IPR007641">
    <property type="entry name" value="RNA_pol_Rpb2_7"/>
</dbReference>
<dbReference type="InterPro" id="IPR014724">
    <property type="entry name" value="RNA_pol_RPB2_OB-fold"/>
</dbReference>
<dbReference type="NCBIfam" id="NF001616">
    <property type="entry name" value="PRK00405.1"/>
    <property type="match status" value="1"/>
</dbReference>
<dbReference type="PANTHER" id="PTHR20856">
    <property type="entry name" value="DNA-DIRECTED RNA POLYMERASE I SUBUNIT 2"/>
    <property type="match status" value="1"/>
</dbReference>
<dbReference type="Pfam" id="PF04561">
    <property type="entry name" value="RNA_pol_Rpb2_2"/>
    <property type="match status" value="1"/>
</dbReference>
<dbReference type="Pfam" id="PF04565">
    <property type="entry name" value="RNA_pol_Rpb2_3"/>
    <property type="match status" value="1"/>
</dbReference>
<dbReference type="Pfam" id="PF00562">
    <property type="entry name" value="RNA_pol_Rpb2_6"/>
    <property type="match status" value="1"/>
</dbReference>
<dbReference type="Pfam" id="PF04560">
    <property type="entry name" value="RNA_pol_Rpb2_7"/>
    <property type="match status" value="1"/>
</dbReference>
<dbReference type="SUPFAM" id="SSF64484">
    <property type="entry name" value="beta and beta-prime subunits of DNA dependent RNA-polymerase"/>
    <property type="match status" value="1"/>
</dbReference>
<dbReference type="PROSITE" id="PS01166">
    <property type="entry name" value="RNA_POL_BETA"/>
    <property type="match status" value="1"/>
</dbReference>
<sequence length="1070" mass="120677">MIRDGNEEMSTIPGFSQIQFEGFCRFIDQGLMEELYKFPKIEDTDQEIEFQLFVETYQLAEPLIKERDAVYESLTYSSELYVPAGLIWKTSRNMQEQTIFIGNIPLMNSLGTSIVNGIYRIVINQILQSPGIYYRSELDHNGTSVYTGTIISDWGGRSELEIDRKARIWARVSRKQKISILVLSSAMGSNLREILDNVCYPEIFLSFPNDKEKKKIGSKENAILEFYQQFACVGGDPVFSESLCKELQKKFFQQRCELGRIGRRNMNRRLNLDIPQNNTFLLPRDILAAADRLIGIKFGMGTLDDMNHLKNKRIRSVADLLQDQFGLALVRLENAVRGTICGAIRHKLIPTPQNLVTSTPLTTTYESFFGLHPLSQVLDRTNPLTQIVHGRKSSYLGPGGLTGRTASFRIRDIHPSHYGRICPIDTSEGINVGLIGSLAIHARIGHWGSLESPFYEISERSKKVRMLYLSPSKDEYYMVAAGNSLSLNKGIQEEQVVPARYRQEFLTIAWEQVHLRSIFPFQYFSIGASLIPFIEHNDANRALMSSNMQRQAVPLSRSEKCIVGTGLERQAALDSGVSAIAEHEGKIIYTDIDKIILSGNGDTLRIPLVMYQRSNKNTCMHQKPQVQRGKCIKKGQILADGAATVGGELALGKNVLVAYMPWEGYNSEDAVLISECLVYRDIYTSFHIRKYEIQTHVTSQGPERITNEIPHLEAHLLRNLDKNGIVMLGSWVETGDILVGKLTPQTSKESSYAPEDRLLRAILGIQVSTSKETCLKLPIGGRGRVIDVRWIQKKGGSNYNPETIRVYISQKREIKVGDKVAGRHGNKGIISKILPRQDMPYLQNGTPVDMVFNPLGVPSRMNVGQIFECSLGLAGGLLDRHYRIAPFDERYEQEASRKLVFSELYEASKQTANPWVFEPEYPGKSRIFDGRTGDPFEQPVIIGKSYIMKLIHQVDDKIHGRSSGHYALVTQQPLRGRAKQGGQRVGEMEVWALEGFGVAHILQEMLTYKSDHIRARQEVLGTTIIGGTIPNPEDTPESFRLLVRELRSLALELNHFLVSEKNFQINRKAA</sequence>
<name>RPOB_BUXMI</name>
<protein>
    <recommendedName>
        <fullName evidence="1">DNA-directed RNA polymerase subunit beta</fullName>
        <ecNumber evidence="1">2.7.7.6</ecNumber>
    </recommendedName>
    <alternativeName>
        <fullName evidence="1">PEP</fullName>
    </alternativeName>
    <alternativeName>
        <fullName evidence="1">Plastid-encoded RNA polymerase subunit beta</fullName>
        <shortName evidence="1">RNA polymerase subunit beta</shortName>
    </alternativeName>
</protein>
<proteinExistence type="inferred from homology"/>
<reference key="1">
    <citation type="journal article" date="2007" name="Mol. Phylogenet. Evol.">
        <title>Phylogenetic and evolutionary implications of complete chloroplast genome sequences of four early-diverging angiosperms: Buxus (Buxaceae), Chloranthus (Chloranthaceae), Dioscorea (Dioscoreaceae), and Illicium (Schisandraceae).</title>
        <authorList>
            <person name="Hansen D.R."/>
            <person name="Dastidar S.G."/>
            <person name="Cai Z."/>
            <person name="Penaflor C."/>
            <person name="Kuehl J.V."/>
            <person name="Boore J.L."/>
            <person name="Jansen R.K."/>
        </authorList>
    </citation>
    <scope>NUCLEOTIDE SEQUENCE [LARGE SCALE GENOMIC DNA]</scope>
</reference>
<accession>A6MM28</accession>